<gene>
    <name type="primary">Rims2</name>
    <name type="synonym">Rab3ip2</name>
    <name type="synonym">Rim2</name>
</gene>
<feature type="chain" id="PRO_0000190202" description="Regulating synaptic membrane exocytosis protein 2">
    <location>
        <begin position="1"/>
        <end position="1530"/>
    </location>
</feature>
<feature type="domain" description="RabBD" evidence="7">
    <location>
        <begin position="26"/>
        <end position="194"/>
    </location>
</feature>
<feature type="domain" description="PDZ" evidence="6">
    <location>
        <begin position="677"/>
        <end position="763"/>
    </location>
</feature>
<feature type="domain" description="C2 1" evidence="4">
    <location>
        <begin position="814"/>
        <end position="937"/>
    </location>
</feature>
<feature type="domain" description="C2 2" evidence="4">
    <location>
        <begin position="1376"/>
        <end position="1494"/>
    </location>
</feature>
<feature type="zinc finger region" description="FYVE-type" evidence="5">
    <location>
        <begin position="126"/>
        <end position="182"/>
    </location>
</feature>
<feature type="region of interest" description="Disordered" evidence="8">
    <location>
        <begin position="1"/>
        <end position="34"/>
    </location>
</feature>
<feature type="region of interest" description="Disordered" evidence="8">
    <location>
        <begin position="195"/>
        <end position="608"/>
    </location>
</feature>
<feature type="region of interest" description="Disordered" evidence="8">
    <location>
        <begin position="632"/>
        <end position="655"/>
    </location>
</feature>
<feature type="region of interest" description="Disordered" evidence="8">
    <location>
        <begin position="771"/>
        <end position="802"/>
    </location>
</feature>
<feature type="region of interest" description="Disordered" evidence="8">
    <location>
        <begin position="948"/>
        <end position="982"/>
    </location>
</feature>
<feature type="region of interest" description="Disordered" evidence="8">
    <location>
        <begin position="1003"/>
        <end position="1122"/>
    </location>
</feature>
<feature type="region of interest" description="Disordered" evidence="8">
    <location>
        <begin position="1130"/>
        <end position="1149"/>
    </location>
</feature>
<feature type="region of interest" description="Disordered" evidence="8">
    <location>
        <begin position="1154"/>
        <end position="1187"/>
    </location>
</feature>
<feature type="region of interest" description="Disordered" evidence="8">
    <location>
        <begin position="1242"/>
        <end position="1263"/>
    </location>
</feature>
<feature type="region of interest" description="Disordered" evidence="8">
    <location>
        <begin position="1282"/>
        <end position="1307"/>
    </location>
</feature>
<feature type="compositionally biased region" description="Pro residues" evidence="8">
    <location>
        <begin position="10"/>
        <end position="25"/>
    </location>
</feature>
<feature type="compositionally biased region" description="Basic and acidic residues" evidence="8">
    <location>
        <begin position="210"/>
        <end position="225"/>
    </location>
</feature>
<feature type="compositionally biased region" description="Basic and acidic residues" evidence="8">
    <location>
        <begin position="327"/>
        <end position="338"/>
    </location>
</feature>
<feature type="compositionally biased region" description="Basic and acidic residues" evidence="8">
    <location>
        <begin position="357"/>
        <end position="375"/>
    </location>
</feature>
<feature type="compositionally biased region" description="Basic and acidic residues" evidence="8">
    <location>
        <begin position="391"/>
        <end position="410"/>
    </location>
</feature>
<feature type="compositionally biased region" description="Basic and acidic residues" evidence="8">
    <location>
        <begin position="419"/>
        <end position="443"/>
    </location>
</feature>
<feature type="compositionally biased region" description="Polar residues" evidence="8">
    <location>
        <begin position="458"/>
        <end position="472"/>
    </location>
</feature>
<feature type="compositionally biased region" description="Basic and acidic residues" evidence="8">
    <location>
        <begin position="484"/>
        <end position="501"/>
    </location>
</feature>
<feature type="compositionally biased region" description="Polar residues" evidence="8">
    <location>
        <begin position="519"/>
        <end position="530"/>
    </location>
</feature>
<feature type="compositionally biased region" description="Basic residues" evidence="8">
    <location>
        <begin position="537"/>
        <end position="546"/>
    </location>
</feature>
<feature type="compositionally biased region" description="Acidic residues" evidence="8">
    <location>
        <begin position="567"/>
        <end position="577"/>
    </location>
</feature>
<feature type="compositionally biased region" description="Basic and acidic residues" evidence="8">
    <location>
        <begin position="578"/>
        <end position="592"/>
    </location>
</feature>
<feature type="compositionally biased region" description="Basic and acidic residues" evidence="8">
    <location>
        <begin position="643"/>
        <end position="653"/>
    </location>
</feature>
<feature type="compositionally biased region" description="Polar residues" evidence="8">
    <location>
        <begin position="1003"/>
        <end position="1024"/>
    </location>
</feature>
<feature type="compositionally biased region" description="Basic and acidic residues" evidence="8">
    <location>
        <begin position="1067"/>
        <end position="1086"/>
    </location>
</feature>
<feature type="compositionally biased region" description="Polar residues" evidence="8">
    <location>
        <begin position="1088"/>
        <end position="1101"/>
    </location>
</feature>
<feature type="compositionally biased region" description="Basic and acidic residues" evidence="8">
    <location>
        <begin position="1154"/>
        <end position="1165"/>
    </location>
</feature>
<feature type="compositionally biased region" description="Low complexity" evidence="8">
    <location>
        <begin position="1178"/>
        <end position="1187"/>
    </location>
</feature>
<feature type="binding site" evidence="5">
    <location>
        <position position="132"/>
    </location>
    <ligand>
        <name>Zn(2+)</name>
        <dbReference type="ChEBI" id="CHEBI:29105"/>
        <label>1</label>
    </ligand>
</feature>
<feature type="binding site" evidence="5">
    <location>
        <position position="135"/>
    </location>
    <ligand>
        <name>Zn(2+)</name>
        <dbReference type="ChEBI" id="CHEBI:29105"/>
        <label>1</label>
    </ligand>
</feature>
<feature type="binding site" evidence="5">
    <location>
        <position position="148"/>
    </location>
    <ligand>
        <name>Zn(2+)</name>
        <dbReference type="ChEBI" id="CHEBI:29105"/>
        <label>2</label>
    </ligand>
</feature>
<feature type="binding site" evidence="5">
    <location>
        <position position="151"/>
    </location>
    <ligand>
        <name>Zn(2+)</name>
        <dbReference type="ChEBI" id="CHEBI:29105"/>
        <label>2</label>
    </ligand>
</feature>
<feature type="binding site" evidence="5">
    <location>
        <position position="156"/>
    </location>
    <ligand>
        <name>Zn(2+)</name>
        <dbReference type="ChEBI" id="CHEBI:29105"/>
        <label>1</label>
    </ligand>
</feature>
<feature type="binding site" evidence="5">
    <location>
        <position position="159"/>
    </location>
    <ligand>
        <name>Zn(2+)</name>
        <dbReference type="ChEBI" id="CHEBI:29105"/>
        <label>1</label>
    </ligand>
</feature>
<feature type="binding site" evidence="5">
    <location>
        <position position="174"/>
    </location>
    <ligand>
        <name>Zn(2+)</name>
        <dbReference type="ChEBI" id="CHEBI:29105"/>
        <label>2</label>
    </ligand>
</feature>
<feature type="binding site" evidence="5">
    <location>
        <position position="177"/>
    </location>
    <ligand>
        <name>Zn(2+)</name>
        <dbReference type="ChEBI" id="CHEBI:29105"/>
        <label>2</label>
    </ligand>
</feature>
<feature type="modified residue" description="Phosphoserine" evidence="13 14">
    <location>
        <position position="409"/>
    </location>
</feature>
<feature type="modified residue" description="Phosphothreonine" evidence="3">
    <location>
        <position position="698"/>
    </location>
</feature>
<feature type="modified residue" description="Phosphoserine" evidence="14">
    <location>
        <position position="800"/>
    </location>
</feature>
<feature type="modified residue" description="Phosphoserine" evidence="14">
    <location>
        <position position="803"/>
    </location>
</feature>
<feature type="modified residue" description="Phosphoserine" evidence="2">
    <location>
        <position position="1095"/>
    </location>
</feature>
<feature type="modified residue" description="Phosphoserine" evidence="2">
    <location>
        <position position="1175"/>
    </location>
</feature>
<feature type="modified residue" description="Phosphoserine" evidence="2">
    <location>
        <position position="1251"/>
    </location>
</feature>
<feature type="modified residue" description="Phosphoserine" evidence="14">
    <location>
        <position position="1515"/>
    </location>
</feature>
<feature type="modified residue" description="Phosphoserine" evidence="14">
    <location>
        <position position="1518"/>
    </location>
</feature>
<feature type="splice variant" id="VSP_008181" description="In isoform 2." evidence="12">
    <location>
        <begin position="1"/>
        <end position="1245"/>
    </location>
</feature>
<feature type="splice variant" id="VSP_008182" description="In isoform 3." evidence="12">
    <location>
        <begin position="1"/>
        <end position="232"/>
    </location>
</feature>
<feature type="splice variant" id="VSP_008183" description="In isoform 3." evidence="12">
    <original>PGDLSVPAVEKGRAHGLTRQDTIKNGSGVKHQIASDMPSD</original>
    <variation>MQFETLRQVCNSVLSHFHGVFSSPPNILQNELFGQTLNNA</variation>
    <location>
        <begin position="233"/>
        <end position="272"/>
    </location>
</feature>
<feature type="splice variant" id="VSP_008184" description="In isoform 2." evidence="12">
    <original>NDGSQSDTAVGALGTSGKKRRSSIGAKMVAIVGLSRKSRSASQLSQT</original>
    <variation>MGRQGLGGTGAAGRSMQRSQSRSSLSASFEALAGYFPCMNSLEEDEG</variation>
    <location>
        <begin position="1246"/>
        <end position="1292"/>
    </location>
</feature>
<protein>
    <recommendedName>
        <fullName>Regulating synaptic membrane exocytosis protein 2</fullName>
    </recommendedName>
    <alternativeName>
        <fullName>Rab-3-interacting molecule 2</fullName>
        <shortName>RIM 2</shortName>
    </alternativeName>
    <alternativeName>
        <fullName>Rab-3-interacting protein 2</fullName>
    </alternativeName>
</protein>
<keyword id="KW-0025">Alternative splicing</keyword>
<keyword id="KW-0221">Differentiation</keyword>
<keyword id="KW-0268">Exocytosis</keyword>
<keyword id="KW-0479">Metal-binding</keyword>
<keyword id="KW-0532">Neurotransmitter transport</keyword>
<keyword id="KW-0597">Phosphoprotein</keyword>
<keyword id="KW-1185">Reference proteome</keyword>
<keyword id="KW-0677">Repeat</keyword>
<keyword id="KW-0770">Synapse</keyword>
<keyword id="KW-0771">Synaptosome</keyword>
<keyword id="KW-0813">Transport</keyword>
<keyword id="KW-0862">Zinc</keyword>
<keyword id="KW-0863">Zinc-finger</keyword>
<accession>Q9EQZ7</accession>
<accession>Q8C433</accession>
<accession>Q8CCK2</accession>
<dbReference type="EMBL" id="AB021131">
    <property type="protein sequence ID" value="BAB18975.1"/>
    <property type="molecule type" value="mRNA"/>
</dbReference>
<dbReference type="EMBL" id="AK032619">
    <property type="protein sequence ID" value="BAC27953.1"/>
    <property type="molecule type" value="mRNA"/>
</dbReference>
<dbReference type="EMBL" id="AK083172">
    <property type="protein sequence ID" value="BAC38794.1"/>
    <property type="molecule type" value="mRNA"/>
</dbReference>
<dbReference type="CCDS" id="CCDS37067.1">
    <molecule id="Q9EQZ7-1"/>
</dbReference>
<dbReference type="CCDS" id="CCDS88756.1">
    <molecule id="Q9EQZ7-2"/>
</dbReference>
<dbReference type="RefSeq" id="NP_001243313.1">
    <molecule id="Q9EQZ7-2"/>
    <property type="nucleotide sequence ID" value="NM_001256384.1"/>
</dbReference>
<dbReference type="RefSeq" id="NP_444501.1">
    <molecule id="Q9EQZ7-1"/>
    <property type="nucleotide sequence ID" value="NM_053271.2"/>
</dbReference>
<dbReference type="BMRB" id="Q9EQZ7"/>
<dbReference type="SMR" id="Q9EQZ7"/>
<dbReference type="BioGRID" id="228026">
    <property type="interactions" value="12"/>
</dbReference>
<dbReference type="CORUM" id="Q9EQZ7"/>
<dbReference type="FunCoup" id="Q9EQZ7">
    <property type="interactions" value="473"/>
</dbReference>
<dbReference type="IntAct" id="Q9EQZ7">
    <property type="interactions" value="2"/>
</dbReference>
<dbReference type="MINT" id="Q9EQZ7"/>
<dbReference type="STRING" id="10090.ENSMUSP00000048719"/>
<dbReference type="GlyGen" id="Q9EQZ7">
    <property type="glycosylation" value="5 sites, 1 N-linked glycan (1 site), 1 O-linked glycan (2 sites)"/>
</dbReference>
<dbReference type="iPTMnet" id="Q9EQZ7"/>
<dbReference type="PhosphoSitePlus" id="Q9EQZ7"/>
<dbReference type="SwissPalm" id="Q9EQZ7"/>
<dbReference type="jPOST" id="Q9EQZ7"/>
<dbReference type="PaxDb" id="10090-ENSMUSP00000048719"/>
<dbReference type="ProteomicsDB" id="254881">
    <molecule id="Q9EQZ7-1"/>
</dbReference>
<dbReference type="ProteomicsDB" id="254882">
    <molecule id="Q9EQZ7-2"/>
</dbReference>
<dbReference type="ProteomicsDB" id="254883">
    <molecule id="Q9EQZ7-3"/>
</dbReference>
<dbReference type="Antibodypedia" id="26403">
    <property type="antibodies" value="210 antibodies from 29 providers"/>
</dbReference>
<dbReference type="DNASU" id="116838"/>
<dbReference type="Ensembl" id="ENSMUST00000082054.12">
    <molecule id="Q9EQZ7-1"/>
    <property type="protein sequence ID" value="ENSMUSP00000080711.6"/>
    <property type="gene ID" value="ENSMUSG00000037386.17"/>
</dbReference>
<dbReference type="Ensembl" id="ENSMUST00000226410.2">
    <molecule id="Q9EQZ7-2"/>
    <property type="protein sequence ID" value="ENSMUSP00000153868.2"/>
    <property type="gene ID" value="ENSMUSG00000037386.17"/>
</dbReference>
<dbReference type="GeneID" id="116838"/>
<dbReference type="KEGG" id="mmu:116838"/>
<dbReference type="UCSC" id="uc007vod.2">
    <molecule id="Q9EQZ7-1"/>
    <property type="organism name" value="mouse"/>
</dbReference>
<dbReference type="UCSC" id="uc007voh.2">
    <molecule id="Q9EQZ7-2"/>
    <property type="organism name" value="mouse"/>
</dbReference>
<dbReference type="AGR" id="MGI:2152972"/>
<dbReference type="CTD" id="9699"/>
<dbReference type="MGI" id="MGI:2152972">
    <property type="gene designation" value="Rims2"/>
</dbReference>
<dbReference type="VEuPathDB" id="HostDB:ENSMUSG00000037386"/>
<dbReference type="eggNOG" id="KOG2060">
    <property type="taxonomic scope" value="Eukaryota"/>
</dbReference>
<dbReference type="eggNOG" id="KOG3799">
    <property type="taxonomic scope" value="Eukaryota"/>
</dbReference>
<dbReference type="GeneTree" id="ENSGT00940000155236"/>
<dbReference type="HOGENOM" id="CLU_001061_1_0_1"/>
<dbReference type="InParanoid" id="Q9EQZ7"/>
<dbReference type="OrthoDB" id="420032at2759"/>
<dbReference type="PhylomeDB" id="Q9EQZ7"/>
<dbReference type="BioGRID-ORCS" id="116838">
    <property type="hits" value="3 hits in 80 CRISPR screens"/>
</dbReference>
<dbReference type="CD-CODE" id="CE726F99">
    <property type="entry name" value="Postsynaptic density"/>
</dbReference>
<dbReference type="ChiTaRS" id="Rims2">
    <property type="organism name" value="mouse"/>
</dbReference>
<dbReference type="PRO" id="PR:Q9EQZ7"/>
<dbReference type="Proteomes" id="UP000000589">
    <property type="component" value="Chromosome 15"/>
</dbReference>
<dbReference type="RNAct" id="Q9EQZ7">
    <property type="molecule type" value="protein"/>
</dbReference>
<dbReference type="Bgee" id="ENSMUSG00000037386">
    <property type="expression patterns" value="Expressed in rostral migratory stream and 174 other cell types or tissues"/>
</dbReference>
<dbReference type="ExpressionAtlas" id="Q9EQZ7">
    <property type="expression patterns" value="baseline and differential"/>
</dbReference>
<dbReference type="GO" id="GO:0098982">
    <property type="term" value="C:GABA-ergic synapse"/>
    <property type="evidence" value="ECO:0000314"/>
    <property type="project" value="SynGO"/>
</dbReference>
<dbReference type="GO" id="GO:0098978">
    <property type="term" value="C:glutamatergic synapse"/>
    <property type="evidence" value="ECO:0000314"/>
    <property type="project" value="SynGO"/>
</dbReference>
<dbReference type="GO" id="GO:0060077">
    <property type="term" value="C:inhibitory synapse"/>
    <property type="evidence" value="ECO:0000315"/>
    <property type="project" value="SynGO-UCL"/>
</dbReference>
<dbReference type="GO" id="GO:0016020">
    <property type="term" value="C:membrane"/>
    <property type="evidence" value="ECO:0007669"/>
    <property type="project" value="InterPro"/>
</dbReference>
<dbReference type="GO" id="GO:0043005">
    <property type="term" value="C:neuron projection"/>
    <property type="evidence" value="ECO:0007669"/>
    <property type="project" value="UniProtKB-KW"/>
</dbReference>
<dbReference type="GO" id="GO:0098793">
    <property type="term" value="C:presynapse"/>
    <property type="evidence" value="ECO:0007669"/>
    <property type="project" value="GOC"/>
</dbReference>
<dbReference type="GO" id="GO:0030674">
    <property type="term" value="F:protein-macromolecule adaptor activity"/>
    <property type="evidence" value="ECO:0000314"/>
    <property type="project" value="MGI"/>
</dbReference>
<dbReference type="GO" id="GO:0031267">
    <property type="term" value="F:small GTPase binding"/>
    <property type="evidence" value="ECO:0007669"/>
    <property type="project" value="InterPro"/>
</dbReference>
<dbReference type="GO" id="GO:0098882">
    <property type="term" value="F:structural constituent of presynaptic active zone"/>
    <property type="evidence" value="ECO:0000314"/>
    <property type="project" value="SynGO"/>
</dbReference>
<dbReference type="GO" id="GO:0044325">
    <property type="term" value="F:transmembrane transporter binding"/>
    <property type="evidence" value="ECO:0000314"/>
    <property type="project" value="MGI"/>
</dbReference>
<dbReference type="GO" id="GO:0008270">
    <property type="term" value="F:zinc ion binding"/>
    <property type="evidence" value="ECO:0007669"/>
    <property type="project" value="UniProtKB-KW"/>
</dbReference>
<dbReference type="GO" id="GO:0007188">
    <property type="term" value="P:adenylate cyclase-modulating G protein-coupled receptor signaling pathway"/>
    <property type="evidence" value="ECO:0000314"/>
    <property type="project" value="MGI"/>
</dbReference>
<dbReference type="GO" id="GO:0048791">
    <property type="term" value="P:calcium ion-regulated exocytosis of neurotransmitter"/>
    <property type="evidence" value="ECO:0000316"/>
    <property type="project" value="MGI"/>
</dbReference>
<dbReference type="GO" id="GO:0017156">
    <property type="term" value="P:calcium-ion regulated exocytosis"/>
    <property type="evidence" value="ECO:0000314"/>
    <property type="project" value="MGI"/>
</dbReference>
<dbReference type="GO" id="GO:0030154">
    <property type="term" value="P:cell differentiation"/>
    <property type="evidence" value="ECO:0007669"/>
    <property type="project" value="UniProtKB-KW"/>
</dbReference>
<dbReference type="GO" id="GO:0051649">
    <property type="term" value="P:establishment of localization in cell"/>
    <property type="evidence" value="ECO:0000315"/>
    <property type="project" value="MGI"/>
</dbReference>
<dbReference type="GO" id="GO:0030073">
    <property type="term" value="P:insulin secretion"/>
    <property type="evidence" value="ECO:0000314"/>
    <property type="project" value="MGI"/>
</dbReference>
<dbReference type="GO" id="GO:0006886">
    <property type="term" value="P:intracellular protein transport"/>
    <property type="evidence" value="ECO:0007669"/>
    <property type="project" value="InterPro"/>
</dbReference>
<dbReference type="GO" id="GO:0007269">
    <property type="term" value="P:neurotransmitter secretion"/>
    <property type="evidence" value="ECO:0000316"/>
    <property type="project" value="MGI"/>
</dbReference>
<dbReference type="GO" id="GO:2000463">
    <property type="term" value="P:positive regulation of excitatory postsynaptic potential"/>
    <property type="evidence" value="ECO:0000316"/>
    <property type="project" value="ParkinsonsUK-UCL"/>
</dbReference>
<dbReference type="GO" id="GO:0010628">
    <property type="term" value="P:positive regulation of gene expression"/>
    <property type="evidence" value="ECO:0000316"/>
    <property type="project" value="ParkinsonsUK-UCL"/>
</dbReference>
<dbReference type="GO" id="GO:0097151">
    <property type="term" value="P:positive regulation of inhibitory postsynaptic potential"/>
    <property type="evidence" value="ECO:0000316"/>
    <property type="project" value="ParkinsonsUK-UCL"/>
</dbReference>
<dbReference type="GO" id="GO:0150037">
    <property type="term" value="P:regulation of calcium-dependent activation of synaptic vesicle fusion"/>
    <property type="evidence" value="ECO:0000314"/>
    <property type="project" value="SynGO"/>
</dbReference>
<dbReference type="GO" id="GO:0017157">
    <property type="term" value="P:regulation of exocytosis"/>
    <property type="evidence" value="ECO:0000315"/>
    <property type="project" value="MGI"/>
</dbReference>
<dbReference type="GO" id="GO:0042391">
    <property type="term" value="P:regulation of membrane potential"/>
    <property type="evidence" value="ECO:0000314"/>
    <property type="project" value="MGI"/>
</dbReference>
<dbReference type="GO" id="GO:0061669">
    <property type="term" value="P:spontaneous neurotransmitter secretion"/>
    <property type="evidence" value="ECO:0000316"/>
    <property type="project" value="ParkinsonsUK-UCL"/>
</dbReference>
<dbReference type="GO" id="GO:0016081">
    <property type="term" value="P:synaptic vesicle docking"/>
    <property type="evidence" value="ECO:0000314"/>
    <property type="project" value="SynGO"/>
</dbReference>
<dbReference type="GO" id="GO:0016082">
    <property type="term" value="P:synaptic vesicle priming"/>
    <property type="evidence" value="ECO:0000314"/>
    <property type="project" value="SynGO"/>
</dbReference>
<dbReference type="CDD" id="cd04031">
    <property type="entry name" value="C2A_RIM1alpha"/>
    <property type="match status" value="1"/>
</dbReference>
<dbReference type="CDD" id="cd04028">
    <property type="entry name" value="C2B_RIM1alpha"/>
    <property type="match status" value="1"/>
</dbReference>
<dbReference type="CDD" id="cd06714">
    <property type="entry name" value="PDZ_RIM-like"/>
    <property type="match status" value="1"/>
</dbReference>
<dbReference type="FunFam" id="3.30.40.10:FF:000546">
    <property type="entry name" value="Regulating synaptic membrane exocytosis 1"/>
    <property type="match status" value="1"/>
</dbReference>
<dbReference type="FunFam" id="2.60.40.150:FF:000001">
    <property type="entry name" value="Regulating synaptic membrane exocytosis 3, isoform CRA_a"/>
    <property type="match status" value="1"/>
</dbReference>
<dbReference type="FunFam" id="2.30.42.10:FF:000003">
    <property type="entry name" value="Regulating synaptic membrane exocytosis protein 1, putative"/>
    <property type="match status" value="1"/>
</dbReference>
<dbReference type="FunFam" id="2.60.40.150:FF:000003">
    <property type="entry name" value="Regulating synaptic membrane exocytosis protein 2"/>
    <property type="match status" value="1"/>
</dbReference>
<dbReference type="Gene3D" id="2.30.42.10">
    <property type="match status" value="1"/>
</dbReference>
<dbReference type="Gene3D" id="2.60.40.150">
    <property type="entry name" value="C2 domain"/>
    <property type="match status" value="2"/>
</dbReference>
<dbReference type="Gene3D" id="3.30.40.10">
    <property type="entry name" value="Zinc/RING finger domain, C3HC4 (zinc finger)"/>
    <property type="match status" value="1"/>
</dbReference>
<dbReference type="InterPro" id="IPR000008">
    <property type="entry name" value="C2_dom"/>
</dbReference>
<dbReference type="InterPro" id="IPR035892">
    <property type="entry name" value="C2_domain_sf"/>
</dbReference>
<dbReference type="InterPro" id="IPR001478">
    <property type="entry name" value="PDZ"/>
</dbReference>
<dbReference type="InterPro" id="IPR036034">
    <property type="entry name" value="PDZ_sf"/>
</dbReference>
<dbReference type="InterPro" id="IPR010911">
    <property type="entry name" value="Rab_BD"/>
</dbReference>
<dbReference type="InterPro" id="IPR039032">
    <property type="entry name" value="Rim-like"/>
</dbReference>
<dbReference type="InterPro" id="IPR054386">
    <property type="entry name" value="RIM_Znf"/>
</dbReference>
<dbReference type="InterPro" id="IPR017455">
    <property type="entry name" value="Znf_FYVE-rel"/>
</dbReference>
<dbReference type="InterPro" id="IPR011011">
    <property type="entry name" value="Znf_FYVE_PHD"/>
</dbReference>
<dbReference type="InterPro" id="IPR013083">
    <property type="entry name" value="Znf_RING/FYVE/PHD"/>
</dbReference>
<dbReference type="PANTHER" id="PTHR12157">
    <property type="entry name" value="REGULATING SYNAPTIC MEMBRANE EXOCYTOSIS PROTEIN"/>
    <property type="match status" value="1"/>
</dbReference>
<dbReference type="PANTHER" id="PTHR12157:SF15">
    <property type="entry name" value="REGULATING SYNAPTIC MEMBRANE EXOCYTOSIS PROTEIN 2"/>
    <property type="match status" value="1"/>
</dbReference>
<dbReference type="Pfam" id="PF00168">
    <property type="entry name" value="C2"/>
    <property type="match status" value="2"/>
</dbReference>
<dbReference type="Pfam" id="PF00595">
    <property type="entry name" value="PDZ"/>
    <property type="match status" value="1"/>
</dbReference>
<dbReference type="Pfam" id="PF22601">
    <property type="entry name" value="RIM2a_ZnF"/>
    <property type="match status" value="1"/>
</dbReference>
<dbReference type="SMART" id="SM00239">
    <property type="entry name" value="C2"/>
    <property type="match status" value="2"/>
</dbReference>
<dbReference type="SMART" id="SM00228">
    <property type="entry name" value="PDZ"/>
    <property type="match status" value="1"/>
</dbReference>
<dbReference type="SUPFAM" id="SSF49562">
    <property type="entry name" value="C2 domain (Calcium/lipid-binding domain, CaLB)"/>
    <property type="match status" value="2"/>
</dbReference>
<dbReference type="SUPFAM" id="SSF57903">
    <property type="entry name" value="FYVE/PHD zinc finger"/>
    <property type="match status" value="1"/>
</dbReference>
<dbReference type="SUPFAM" id="SSF50156">
    <property type="entry name" value="PDZ domain-like"/>
    <property type="match status" value="1"/>
</dbReference>
<dbReference type="PROSITE" id="PS50004">
    <property type="entry name" value="C2"/>
    <property type="match status" value="2"/>
</dbReference>
<dbReference type="PROSITE" id="PS50106">
    <property type="entry name" value="PDZ"/>
    <property type="match status" value="1"/>
</dbReference>
<dbReference type="PROSITE" id="PS50916">
    <property type="entry name" value="RABBD"/>
    <property type="match status" value="1"/>
</dbReference>
<dbReference type="PROSITE" id="PS50178">
    <property type="entry name" value="ZF_FYVE"/>
    <property type="match status" value="1"/>
</dbReference>
<organism>
    <name type="scientific">Mus musculus</name>
    <name type="common">Mouse</name>
    <dbReference type="NCBI Taxonomy" id="10090"/>
    <lineage>
        <taxon>Eukaryota</taxon>
        <taxon>Metazoa</taxon>
        <taxon>Chordata</taxon>
        <taxon>Craniata</taxon>
        <taxon>Vertebrata</taxon>
        <taxon>Euteleostomi</taxon>
        <taxon>Mammalia</taxon>
        <taxon>Eutheria</taxon>
        <taxon>Euarchontoglires</taxon>
        <taxon>Glires</taxon>
        <taxon>Rodentia</taxon>
        <taxon>Myomorpha</taxon>
        <taxon>Muroidea</taxon>
        <taxon>Muridae</taxon>
        <taxon>Murinae</taxon>
        <taxon>Mus</taxon>
        <taxon>Mus</taxon>
    </lineage>
</organism>
<sequence length="1530" mass="172863">MSAPLGPRGRPAPTPAASQPPPQPEMPDLSHLTEEERKIILAVMDRQKKEEEKEQSVLKIKEEHKAQPTQWFPFSGITELVNNVLQPQQKQPNEKEPQTKLHQQFEMYKEQVKKMGEESQQQQEQKGDAPTCGICHKTKFADGCGHNCSYCQTKFCARCGGRVSLRSNKVMWVCNLCRKQQEILTKSGAWFYNSGSNTLQQPDQKVPRGLRNEEAPQEKKAKLHEQPQFQGAPGDLSVPAVEKGRAHGLTRQDTIKNGSGVKHQIASDMPSDRKRSPSVSRDQNRRYEQSEEREDYSQYVPSDGTMPRSPSDYADRRSQREPQFYEEPGHLNYRDSNRRGHRHSKEYIVDDEDVESRDEYERQRREEEYQARYRSDPNLARYPVKPQPYEEQMRIHAEVSRARHERRHSDVSLANAELEDSRISLLRMDRPSRQRSVSERRAAMENQRSYSMERTREAQGQSSYPQRTSNHSPPTPRRSPIPLDRPDMRRADSLRKQHHLDPSSAVRKTKREKMETMLRNDSLSSDQSESVRPPPPRPHKSKKGGKMRQVSLSSSEEELASTPEYTSCDDVELESESVSEKGDSQKGKRKTSEQGVLSDSNTRSERQKKRMYYGGHSLEEDLEWSEPQIKDSGVDTCSSTTLNEEHSHSDKHPVTWQPSKDGDRLIGRILLNKRLKDGSVPRDSGAMLGLKVVGGKMTESGRLCAFITKVKKGSLADTVGHLRPGDEVLEWNGRLLQGATFEEVYNIILESKPEPQVELVVSRPIGDIPRIPDSTHAQLESSSSSFESQKMDRPSISVTSPMSPGMLRDVPQFLSGQLSIKLWFDKVGHQLIVTILGAKDLPSREDGRPRNPYVKIYFLPDRSDKNKRRTKTVKKTLEPKWNQTFIYSPVHRREFRERMLEITLWDQARVREEESEFLGEILIELETALLDDEPHWYKLQTHDVSSLPLPRPSPYLPRRQLHGESPTRRLQRSKRISDSEVSDYDCEDGVGVVSDYRHNGRDLQSSTLSVPEQVMSSNHCSPSGSPHRVDVIGRTRSWSPSAPPPQRNVEQGHRGTRATGHYNTISRMDRHRVMDDHYSSDRDRSHPRTGSVQTSPSSTPGTGRRGRQLPQLPPKGTLERSAMDIEERNRQMKLNKYKQVAGSDPRLEQDYHSKYRSGWDPHRGADTVSTKSSDSDVSDVSAVSRTSSASRFSSTSYMSVQSERPRGNRKISVFTSKMQNRQMGVSGKNLTKSTSISGDMCSLEKNDGSQSDTAVGALGTSGKKRRSSIGAKMVAIVGLSRKSRSASQLSQTEGGGKKLRSTVQRSTETGLAVEMRNWMTRQASRESTDGSMNSYSSEGNLIFPGVRLASDSQFSDFLDGLGPAQLVGRQTLATPAMGDIQVGMMDKKGQLEVEIIRARGLVVKPGSKTLPAPYVKVYLLDNGVCIAKKKTKVARKTLEPLYQQLLSFEESPQGRVLQIIVWGDYGRMDHKSFMGVAQILLDELELSNMVIGWFKLFPPSSLVDPTLAPLTRRASQSSLESSTGPSYSRS</sequence>
<comment type="function">
    <text evidence="3">Rab effector involved in exocytosis. May act as scaffold protein. Plays a role in dendrite formation by melanocytes (By similarity).</text>
</comment>
<comment type="subunit">
    <text evidence="1 9 10 11">Interacts with TSPOAP1 and RIMBP2. Interacts with PPFIA3 and PPFIA4. Interacts via its zinc finger with the first C2 domain of UNC13A. Forms a complex consisting of UNC13A, RIMS2 and RAB3A (By similarity). Heterodimer with PCLO. Part of a ternary complex involving PCLO and EPAC2. Interacts with RAB3A and RAB3B that have been activated by GTP-binding. Interacts with RAB3C, RAB3D and RAB26.</text>
</comment>
<comment type="subcellular location">
    <subcellularLocation>
        <location>Synapse</location>
        <location>Synaptosome</location>
    </subcellularLocation>
</comment>
<comment type="alternative products">
    <event type="alternative splicing"/>
    <isoform>
        <id>Q9EQZ7-1</id>
        <name>1</name>
        <name>RIM2-alpha</name>
        <sequence type="displayed"/>
    </isoform>
    <isoform>
        <id>Q9EQZ7-2</id>
        <name>2</name>
        <name>RIM2-gamma</name>
        <sequence type="described" ref="VSP_008181 VSP_008184"/>
    </isoform>
    <isoform>
        <id>Q9EQZ7-3</id>
        <name>3</name>
        <name>RIM2-beta</name>
        <sequence type="described" ref="VSP_008182 VSP_008183"/>
    </isoform>
</comment>
<comment type="tissue specificity">
    <text evidence="9">Detected in testis, pituitary and an insulinoma cell line. Detected at low levels in cerebellar cortex.</text>
</comment>
<name>RIMS2_MOUSE</name>
<reference key="1">
    <citation type="journal article" date="2000" name="Nat. Cell Biol.">
        <title>cAMP-GEFII is a direct target of cAMP in regulated exocytosis.</title>
        <authorList>
            <person name="Ozaki N."/>
            <person name="Shibasaki T."/>
            <person name="Kashima Y."/>
            <person name="Miki T."/>
            <person name="Takahashi K."/>
            <person name="Ueno H."/>
            <person name="Sunaga Y."/>
            <person name="Yano H."/>
            <person name="Matsuura Y."/>
            <person name="Iwanaga T."/>
            <person name="Takai Y."/>
            <person name="Seino S."/>
        </authorList>
    </citation>
    <scope>NUCLEOTIDE SEQUENCE [MRNA] (ISOFORM 1)</scope>
    <scope>TISSUE SPECIFICITY</scope>
    <scope>INTERACTION WITH RAB3A AND EPAC2</scope>
    <source>
        <tissue>Insulinoma</tissue>
    </source>
</reference>
<reference key="2">
    <citation type="journal article" date="2005" name="Science">
        <title>The transcriptional landscape of the mammalian genome.</title>
        <authorList>
            <person name="Carninci P."/>
            <person name="Kasukawa T."/>
            <person name="Katayama S."/>
            <person name="Gough J."/>
            <person name="Frith M.C."/>
            <person name="Maeda N."/>
            <person name="Oyama R."/>
            <person name="Ravasi T."/>
            <person name="Lenhard B."/>
            <person name="Wells C."/>
            <person name="Kodzius R."/>
            <person name="Shimokawa K."/>
            <person name="Bajic V.B."/>
            <person name="Brenner S.E."/>
            <person name="Batalov S."/>
            <person name="Forrest A.R."/>
            <person name="Zavolan M."/>
            <person name="Davis M.J."/>
            <person name="Wilming L.G."/>
            <person name="Aidinis V."/>
            <person name="Allen J.E."/>
            <person name="Ambesi-Impiombato A."/>
            <person name="Apweiler R."/>
            <person name="Aturaliya R.N."/>
            <person name="Bailey T.L."/>
            <person name="Bansal M."/>
            <person name="Baxter L."/>
            <person name="Beisel K.W."/>
            <person name="Bersano T."/>
            <person name="Bono H."/>
            <person name="Chalk A.M."/>
            <person name="Chiu K.P."/>
            <person name="Choudhary V."/>
            <person name="Christoffels A."/>
            <person name="Clutterbuck D.R."/>
            <person name="Crowe M.L."/>
            <person name="Dalla E."/>
            <person name="Dalrymple B.P."/>
            <person name="de Bono B."/>
            <person name="Della Gatta G."/>
            <person name="di Bernardo D."/>
            <person name="Down T."/>
            <person name="Engstrom P."/>
            <person name="Fagiolini M."/>
            <person name="Faulkner G."/>
            <person name="Fletcher C.F."/>
            <person name="Fukushima T."/>
            <person name="Furuno M."/>
            <person name="Futaki S."/>
            <person name="Gariboldi M."/>
            <person name="Georgii-Hemming P."/>
            <person name="Gingeras T.R."/>
            <person name="Gojobori T."/>
            <person name="Green R.E."/>
            <person name="Gustincich S."/>
            <person name="Harbers M."/>
            <person name="Hayashi Y."/>
            <person name="Hensch T.K."/>
            <person name="Hirokawa N."/>
            <person name="Hill D."/>
            <person name="Huminiecki L."/>
            <person name="Iacono M."/>
            <person name="Ikeo K."/>
            <person name="Iwama A."/>
            <person name="Ishikawa T."/>
            <person name="Jakt M."/>
            <person name="Kanapin A."/>
            <person name="Katoh M."/>
            <person name="Kawasawa Y."/>
            <person name="Kelso J."/>
            <person name="Kitamura H."/>
            <person name="Kitano H."/>
            <person name="Kollias G."/>
            <person name="Krishnan S.P."/>
            <person name="Kruger A."/>
            <person name="Kummerfeld S.K."/>
            <person name="Kurochkin I.V."/>
            <person name="Lareau L.F."/>
            <person name="Lazarevic D."/>
            <person name="Lipovich L."/>
            <person name="Liu J."/>
            <person name="Liuni S."/>
            <person name="McWilliam S."/>
            <person name="Madan Babu M."/>
            <person name="Madera M."/>
            <person name="Marchionni L."/>
            <person name="Matsuda H."/>
            <person name="Matsuzawa S."/>
            <person name="Miki H."/>
            <person name="Mignone F."/>
            <person name="Miyake S."/>
            <person name="Morris K."/>
            <person name="Mottagui-Tabar S."/>
            <person name="Mulder N."/>
            <person name="Nakano N."/>
            <person name="Nakauchi H."/>
            <person name="Ng P."/>
            <person name="Nilsson R."/>
            <person name="Nishiguchi S."/>
            <person name="Nishikawa S."/>
            <person name="Nori F."/>
            <person name="Ohara O."/>
            <person name="Okazaki Y."/>
            <person name="Orlando V."/>
            <person name="Pang K.C."/>
            <person name="Pavan W.J."/>
            <person name="Pavesi G."/>
            <person name="Pesole G."/>
            <person name="Petrovsky N."/>
            <person name="Piazza S."/>
            <person name="Reed J."/>
            <person name="Reid J.F."/>
            <person name="Ring B.Z."/>
            <person name="Ringwald M."/>
            <person name="Rost B."/>
            <person name="Ruan Y."/>
            <person name="Salzberg S.L."/>
            <person name="Sandelin A."/>
            <person name="Schneider C."/>
            <person name="Schoenbach C."/>
            <person name="Sekiguchi K."/>
            <person name="Semple C.A."/>
            <person name="Seno S."/>
            <person name="Sessa L."/>
            <person name="Sheng Y."/>
            <person name="Shibata Y."/>
            <person name="Shimada H."/>
            <person name="Shimada K."/>
            <person name="Silva D."/>
            <person name="Sinclair B."/>
            <person name="Sperling S."/>
            <person name="Stupka E."/>
            <person name="Sugiura K."/>
            <person name="Sultana R."/>
            <person name="Takenaka Y."/>
            <person name="Taki K."/>
            <person name="Tammoja K."/>
            <person name="Tan S.L."/>
            <person name="Tang S."/>
            <person name="Taylor M.S."/>
            <person name="Tegner J."/>
            <person name="Teichmann S.A."/>
            <person name="Ueda H.R."/>
            <person name="van Nimwegen E."/>
            <person name="Verardo R."/>
            <person name="Wei C.L."/>
            <person name="Yagi K."/>
            <person name="Yamanishi H."/>
            <person name="Zabarovsky E."/>
            <person name="Zhu S."/>
            <person name="Zimmer A."/>
            <person name="Hide W."/>
            <person name="Bult C."/>
            <person name="Grimmond S.M."/>
            <person name="Teasdale R.D."/>
            <person name="Liu E.T."/>
            <person name="Brusic V."/>
            <person name="Quackenbush J."/>
            <person name="Wahlestedt C."/>
            <person name="Mattick J.S."/>
            <person name="Hume D.A."/>
            <person name="Kai C."/>
            <person name="Sasaki D."/>
            <person name="Tomaru Y."/>
            <person name="Fukuda S."/>
            <person name="Kanamori-Katayama M."/>
            <person name="Suzuki M."/>
            <person name="Aoki J."/>
            <person name="Arakawa T."/>
            <person name="Iida J."/>
            <person name="Imamura K."/>
            <person name="Itoh M."/>
            <person name="Kato T."/>
            <person name="Kawaji H."/>
            <person name="Kawagashira N."/>
            <person name="Kawashima T."/>
            <person name="Kojima M."/>
            <person name="Kondo S."/>
            <person name="Konno H."/>
            <person name="Nakano K."/>
            <person name="Ninomiya N."/>
            <person name="Nishio T."/>
            <person name="Okada M."/>
            <person name="Plessy C."/>
            <person name="Shibata K."/>
            <person name="Shiraki T."/>
            <person name="Suzuki S."/>
            <person name="Tagami M."/>
            <person name="Waki K."/>
            <person name="Watahiki A."/>
            <person name="Okamura-Oho Y."/>
            <person name="Suzuki H."/>
            <person name="Kawai J."/>
            <person name="Hayashizaki Y."/>
        </authorList>
    </citation>
    <scope>NUCLEOTIDE SEQUENCE [LARGE SCALE MRNA] (ISOFORMS 2 AND 3)</scope>
    <source>
        <strain>C57BL/6J</strain>
        <tissue>Hippocampus</tissue>
        <tissue>Olfactory bulb</tissue>
    </source>
</reference>
<reference key="3">
    <citation type="journal article" date="2003" name="Genomics">
        <title>Genomic definition of RIM proteins: evolutionary amplification of a family of synaptic regulatory proteins.</title>
        <authorList>
            <person name="Wang Y."/>
            <person name="Suedhof T.C."/>
        </authorList>
    </citation>
    <scope>GENOMIC ORGANIZATION</scope>
</reference>
<reference key="4">
    <citation type="journal article" date="2002" name="J. Biol. Chem.">
        <title>Piccolo, a Ca2+ sensor in pancreatic beta-cells. Involvement of cAMP-GEFII.Rim2.Piccolo complex in cAMP-dependent exocytosis.</title>
        <authorList>
            <person name="Fujimoto K."/>
            <person name="Shibasaki T."/>
            <person name="Yokoi N."/>
            <person name="Kashima Y."/>
            <person name="Matsumoto M."/>
            <person name="Sasaki T."/>
            <person name="Tajima N."/>
            <person name="Iwanaga T."/>
            <person name="Seino S."/>
        </authorList>
    </citation>
    <scope>INTERACTION WITH PCLO</scope>
</reference>
<reference key="5">
    <citation type="journal article" date="2003" name="J. Biol. Chem.">
        <title>Distinct Rab binding specificity of Rim1, Rim2, rabphilin, and Noc2. Identification of a critical determinant of Rab3A/Rab27A recognition by Rim2.</title>
        <authorList>
            <person name="Fukuda M."/>
        </authorList>
    </citation>
    <scope>INTERACTION WITH RAB3A; RAB3B; RAB3C; RAB3D AND RAB26</scope>
</reference>
<reference key="6">
    <citation type="journal article" date="2006" name="Mol. Cell. Proteomics">
        <title>Comprehensive identification of phosphorylation sites in postsynaptic density preparations.</title>
        <authorList>
            <person name="Trinidad J.C."/>
            <person name="Specht C.G."/>
            <person name="Thalhammer A."/>
            <person name="Schoepfer R."/>
            <person name="Burlingame A.L."/>
        </authorList>
    </citation>
    <scope>PHOSPHORYLATION [LARGE SCALE ANALYSIS] AT SER-409</scope>
    <scope>IDENTIFICATION BY MASS SPECTROMETRY [LARGE SCALE ANALYSIS]</scope>
    <source>
        <tissue>Brain</tissue>
    </source>
</reference>
<reference key="7">
    <citation type="journal article" date="2010" name="Cell">
        <title>A tissue-specific atlas of mouse protein phosphorylation and expression.</title>
        <authorList>
            <person name="Huttlin E.L."/>
            <person name="Jedrychowski M.P."/>
            <person name="Elias J.E."/>
            <person name="Goswami T."/>
            <person name="Rad R."/>
            <person name="Beausoleil S.A."/>
            <person name="Villen J."/>
            <person name="Haas W."/>
            <person name="Sowa M.E."/>
            <person name="Gygi S.P."/>
        </authorList>
    </citation>
    <scope>PHOSPHORYLATION [LARGE SCALE ANALYSIS] AT SER-409; SER-800; SER-803; SER-1515 AND SER-1518</scope>
    <scope>IDENTIFICATION BY MASS SPECTROMETRY [LARGE SCALE ANALYSIS]</scope>
    <source>
        <tissue>Brain</tissue>
        <tissue>Testis</tissue>
    </source>
</reference>
<evidence type="ECO:0000250" key="1"/>
<evidence type="ECO:0000250" key="2">
    <source>
        <dbReference type="UniProtKB" id="Q9JIS1"/>
    </source>
</evidence>
<evidence type="ECO:0000250" key="3">
    <source>
        <dbReference type="UniProtKB" id="Q9UQ26"/>
    </source>
</evidence>
<evidence type="ECO:0000255" key="4">
    <source>
        <dbReference type="PROSITE-ProRule" id="PRU00041"/>
    </source>
</evidence>
<evidence type="ECO:0000255" key="5">
    <source>
        <dbReference type="PROSITE-ProRule" id="PRU00091"/>
    </source>
</evidence>
<evidence type="ECO:0000255" key="6">
    <source>
        <dbReference type="PROSITE-ProRule" id="PRU00143"/>
    </source>
</evidence>
<evidence type="ECO:0000255" key="7">
    <source>
        <dbReference type="PROSITE-ProRule" id="PRU00234"/>
    </source>
</evidence>
<evidence type="ECO:0000256" key="8">
    <source>
        <dbReference type="SAM" id="MobiDB-lite"/>
    </source>
</evidence>
<evidence type="ECO:0000269" key="9">
    <source>
    </source>
</evidence>
<evidence type="ECO:0000269" key="10">
    <source>
    </source>
</evidence>
<evidence type="ECO:0000269" key="11">
    <source>
    </source>
</evidence>
<evidence type="ECO:0000303" key="12">
    <source>
    </source>
</evidence>
<evidence type="ECO:0007744" key="13">
    <source>
    </source>
</evidence>
<evidence type="ECO:0007744" key="14">
    <source>
    </source>
</evidence>
<proteinExistence type="evidence at protein level"/>